<organism>
    <name type="scientific">Brucella suis (strain ATCC 23445 / NCTC 10510)</name>
    <dbReference type="NCBI Taxonomy" id="470137"/>
    <lineage>
        <taxon>Bacteria</taxon>
        <taxon>Pseudomonadati</taxon>
        <taxon>Pseudomonadota</taxon>
        <taxon>Alphaproteobacteria</taxon>
        <taxon>Hyphomicrobiales</taxon>
        <taxon>Brucellaceae</taxon>
        <taxon>Brucella/Ochrobactrum group</taxon>
        <taxon>Brucella</taxon>
    </lineage>
</organism>
<protein>
    <recommendedName>
        <fullName evidence="1">UPF0303 protein BSUIS_A1462</fullName>
    </recommendedName>
</protein>
<evidence type="ECO:0000255" key="1">
    <source>
        <dbReference type="HAMAP-Rule" id="MF_00761"/>
    </source>
</evidence>
<comment type="similarity">
    <text evidence="1">Belongs to the UPF0303 family.</text>
</comment>
<feature type="chain" id="PRO_1000083529" description="UPF0303 protein BSUIS_A1462">
    <location>
        <begin position="1"/>
        <end position="169"/>
    </location>
</feature>
<sequence>MAQGDDNKQAIGQIIRQEQALIFPSLNENDAFSLGQRIRDIAVKDKLGIAIDISLWDRRLFFAATAGATADNTEWLRRKFNVVRRFHVSTYRLVLEQNREDRMFAPYKALDVADYALAGGGFPIRVSGAGVIGAVIVSGLPQREDHNLVVRAVAEHVGQDPVALALPAA</sequence>
<proteinExistence type="inferred from homology"/>
<dbReference type="EMBL" id="CP000911">
    <property type="protein sequence ID" value="ABY38500.1"/>
    <property type="molecule type" value="Genomic_DNA"/>
</dbReference>
<dbReference type="RefSeq" id="WP_004690981.1">
    <property type="nucleotide sequence ID" value="NC_010169.1"/>
</dbReference>
<dbReference type="SMR" id="B0CHJ9"/>
<dbReference type="KEGG" id="bmt:BSUIS_A1462"/>
<dbReference type="HOGENOM" id="CLU_101036_2_2_5"/>
<dbReference type="Proteomes" id="UP000008545">
    <property type="component" value="Chromosome I"/>
</dbReference>
<dbReference type="Gene3D" id="3.30.450.150">
    <property type="entry name" value="Haem-degrading domain"/>
    <property type="match status" value="1"/>
</dbReference>
<dbReference type="HAMAP" id="MF_00761">
    <property type="entry name" value="UPF0303"/>
    <property type="match status" value="1"/>
</dbReference>
<dbReference type="InterPro" id="IPR005624">
    <property type="entry name" value="PduO/GlcC-like"/>
</dbReference>
<dbReference type="InterPro" id="IPR038084">
    <property type="entry name" value="PduO/GlcC-like_sf"/>
</dbReference>
<dbReference type="InterPro" id="IPR010371">
    <property type="entry name" value="YBR137W-like"/>
</dbReference>
<dbReference type="NCBIfam" id="NF002693">
    <property type="entry name" value="PRK02487.1-2"/>
    <property type="match status" value="1"/>
</dbReference>
<dbReference type="NCBIfam" id="NF002696">
    <property type="entry name" value="PRK02487.1-5"/>
    <property type="match status" value="1"/>
</dbReference>
<dbReference type="PANTHER" id="PTHR28255">
    <property type="match status" value="1"/>
</dbReference>
<dbReference type="PANTHER" id="PTHR28255:SF1">
    <property type="entry name" value="UPF0303 PROTEIN YBR137W"/>
    <property type="match status" value="1"/>
</dbReference>
<dbReference type="Pfam" id="PF03928">
    <property type="entry name" value="HbpS-like"/>
    <property type="match status" value="1"/>
</dbReference>
<dbReference type="PIRSF" id="PIRSF008757">
    <property type="entry name" value="UCP008757"/>
    <property type="match status" value="1"/>
</dbReference>
<dbReference type="SUPFAM" id="SSF143744">
    <property type="entry name" value="GlcG-like"/>
    <property type="match status" value="1"/>
</dbReference>
<name>Y1462_BRUSI</name>
<gene>
    <name type="ordered locus">BSUIS_A1462</name>
</gene>
<reference key="1">
    <citation type="submission" date="2007-12" db="EMBL/GenBank/DDBJ databases">
        <title>Brucella suis ATCC 23445 whole genome shotgun sequencing project.</title>
        <authorList>
            <person name="Setubal J.C."/>
            <person name="Bowns C."/>
            <person name="Boyle S."/>
            <person name="Crasta O.R."/>
            <person name="Czar M.J."/>
            <person name="Dharmanolla C."/>
            <person name="Gillespie J.J."/>
            <person name="Kenyon R.W."/>
            <person name="Lu J."/>
            <person name="Mane S."/>
            <person name="Mohapatra S."/>
            <person name="Nagrani S."/>
            <person name="Purkayastha A."/>
            <person name="Rajasimha H.K."/>
            <person name="Shallom J.M."/>
            <person name="Shallom S."/>
            <person name="Shukla M."/>
            <person name="Snyder E.E."/>
            <person name="Sobral B.W."/>
            <person name="Wattam A.R."/>
            <person name="Will R."/>
            <person name="Williams K."/>
            <person name="Yoo H."/>
            <person name="Bruce D."/>
            <person name="Detter C."/>
            <person name="Munk C."/>
            <person name="Brettin T.S."/>
        </authorList>
    </citation>
    <scope>NUCLEOTIDE SEQUENCE [LARGE SCALE GENOMIC DNA]</scope>
    <source>
        <strain>ATCC 23445 / NCTC 10510</strain>
    </source>
</reference>
<accession>B0CHJ9</accession>